<gene>
    <name type="ORF">Kpol_1052p9</name>
</gene>
<dbReference type="EC" id="3.4.-.-" evidence="6"/>
<dbReference type="EMBL" id="DS480419">
    <property type="protein sequence ID" value="EDO16662.1"/>
    <property type="molecule type" value="Genomic_DNA"/>
</dbReference>
<dbReference type="RefSeq" id="XP_001644520.1">
    <property type="nucleotide sequence ID" value="XM_001644470.1"/>
</dbReference>
<dbReference type="SMR" id="A7TM20"/>
<dbReference type="FunCoup" id="A7TM20">
    <property type="interactions" value="22"/>
</dbReference>
<dbReference type="STRING" id="436907.A7TM20"/>
<dbReference type="GeneID" id="5544818"/>
<dbReference type="KEGG" id="vpo:Kpol_1052p9"/>
<dbReference type="eggNOG" id="KOG2194">
    <property type="taxonomic scope" value="Eukaryota"/>
</dbReference>
<dbReference type="HOGENOM" id="CLU_006412_1_0_1"/>
<dbReference type="InParanoid" id="A7TM20"/>
<dbReference type="OMA" id="TPWPVTI"/>
<dbReference type="OrthoDB" id="76293at2759"/>
<dbReference type="PhylomeDB" id="A7TM20"/>
<dbReference type="Proteomes" id="UP000000267">
    <property type="component" value="Unassembled WGS sequence"/>
</dbReference>
<dbReference type="GO" id="GO:0000329">
    <property type="term" value="C:fungal-type vacuole membrane"/>
    <property type="evidence" value="ECO:0007669"/>
    <property type="project" value="EnsemblFungi"/>
</dbReference>
<dbReference type="GO" id="GO:0046872">
    <property type="term" value="F:metal ion binding"/>
    <property type="evidence" value="ECO:0007669"/>
    <property type="project" value="UniProtKB-KW"/>
</dbReference>
<dbReference type="GO" id="GO:0008235">
    <property type="term" value="F:metalloexopeptidase activity"/>
    <property type="evidence" value="ECO:0007669"/>
    <property type="project" value="InterPro"/>
</dbReference>
<dbReference type="GO" id="GO:0006508">
    <property type="term" value="P:proteolysis"/>
    <property type="evidence" value="ECO:0007669"/>
    <property type="project" value="UniProtKB-KW"/>
</dbReference>
<dbReference type="CDD" id="cd03875">
    <property type="entry name" value="M28_Fxna_like"/>
    <property type="match status" value="1"/>
</dbReference>
<dbReference type="FunFam" id="3.40.630.10:FF:000057">
    <property type="entry name" value="Vacuolar membrane protease"/>
    <property type="match status" value="1"/>
</dbReference>
<dbReference type="Gene3D" id="3.40.630.10">
    <property type="entry name" value="Zn peptidases"/>
    <property type="match status" value="1"/>
</dbReference>
<dbReference type="InterPro" id="IPR048024">
    <property type="entry name" value="Fxna-like_M28_dom"/>
</dbReference>
<dbReference type="InterPro" id="IPR045175">
    <property type="entry name" value="M28_fam"/>
</dbReference>
<dbReference type="InterPro" id="IPR007484">
    <property type="entry name" value="Peptidase_M28"/>
</dbReference>
<dbReference type="InterPro" id="IPR053975">
    <property type="entry name" value="PFF1_C"/>
</dbReference>
<dbReference type="InterPro" id="IPR053976">
    <property type="entry name" value="PFF1_TM"/>
</dbReference>
<dbReference type="PANTHER" id="PTHR12147">
    <property type="entry name" value="METALLOPEPTIDASE M28 FAMILY MEMBER"/>
    <property type="match status" value="1"/>
</dbReference>
<dbReference type="PANTHER" id="PTHR12147:SF58">
    <property type="entry name" value="VACUOLAR MEMBRANE PROTEASE"/>
    <property type="match status" value="1"/>
</dbReference>
<dbReference type="Pfam" id="PF04389">
    <property type="entry name" value="Peptidase_M28"/>
    <property type="match status" value="1"/>
</dbReference>
<dbReference type="Pfam" id="PF22250">
    <property type="entry name" value="PFF1_C"/>
    <property type="match status" value="1"/>
</dbReference>
<dbReference type="Pfam" id="PF22251">
    <property type="entry name" value="PFF1_TM"/>
    <property type="match status" value="1"/>
</dbReference>
<dbReference type="SUPFAM" id="SSF53187">
    <property type="entry name" value="Zn-dependent exopeptidases"/>
    <property type="match status" value="1"/>
</dbReference>
<reference key="1">
    <citation type="journal article" date="2007" name="Proc. Natl. Acad. Sci. U.S.A.">
        <title>Independent sorting-out of thousands of duplicated gene pairs in two yeast species descended from a whole-genome duplication.</title>
        <authorList>
            <person name="Scannell D.R."/>
            <person name="Frank A.C."/>
            <person name="Conant G.C."/>
            <person name="Byrne K.P."/>
            <person name="Woolfit M."/>
            <person name="Wolfe K.H."/>
        </authorList>
    </citation>
    <scope>NUCLEOTIDE SEQUENCE [LARGE SCALE GENOMIC DNA]</scope>
    <source>
        <strain>ATCC 22028 / DSM 70294 / BCRC 21397 / CBS 2163 / NBRC 10782 / NRRL Y-8283 / UCD 57-17</strain>
    </source>
</reference>
<organism>
    <name type="scientific">Vanderwaltozyma polyspora (strain ATCC 22028 / DSM 70294 / BCRC 21397 / CBS 2163 / NBRC 10782 / NRRL Y-8283 / UCD 57-17)</name>
    <name type="common">Kluyveromyces polysporus</name>
    <dbReference type="NCBI Taxonomy" id="436907"/>
    <lineage>
        <taxon>Eukaryota</taxon>
        <taxon>Fungi</taxon>
        <taxon>Dikarya</taxon>
        <taxon>Ascomycota</taxon>
        <taxon>Saccharomycotina</taxon>
        <taxon>Saccharomycetes</taxon>
        <taxon>Saccharomycetales</taxon>
        <taxon>Saccharomycetaceae</taxon>
        <taxon>Vanderwaltozyma</taxon>
    </lineage>
</organism>
<evidence type="ECO:0000250" key="1">
    <source>
        <dbReference type="UniProtKB" id="P38244"/>
    </source>
</evidence>
<evidence type="ECO:0000250" key="2">
    <source>
        <dbReference type="UniProtKB" id="P80561"/>
    </source>
</evidence>
<evidence type="ECO:0000255" key="3"/>
<evidence type="ECO:0000255" key="4">
    <source>
        <dbReference type="PROSITE-ProRule" id="PRU00498"/>
    </source>
</evidence>
<evidence type="ECO:0000256" key="5">
    <source>
        <dbReference type="SAM" id="MobiDB-lite"/>
    </source>
</evidence>
<evidence type="ECO:0000305" key="6"/>
<feature type="chain" id="PRO_0000411747" description="Vacuolar membrane protease">
    <location>
        <begin position="1"/>
        <end position="939"/>
    </location>
</feature>
<feature type="topological domain" description="Cytoplasmic" evidence="1">
    <location>
        <begin position="1"/>
        <end position="11"/>
    </location>
</feature>
<feature type="transmembrane region" description="Helical; Name=1" evidence="3">
    <location>
        <begin position="12"/>
        <end position="32"/>
    </location>
</feature>
<feature type="topological domain" description="Vacuolar" evidence="1">
    <location>
        <begin position="33"/>
        <end position="356"/>
    </location>
</feature>
<feature type="transmembrane region" description="Helical; Name=2" evidence="3">
    <location>
        <begin position="357"/>
        <end position="377"/>
    </location>
</feature>
<feature type="topological domain" description="Cytoplasmic" evidence="1">
    <location>
        <begin position="378"/>
        <end position="388"/>
    </location>
</feature>
<feature type="transmembrane region" description="Helical; Name=3" evidence="3">
    <location>
        <begin position="389"/>
        <end position="409"/>
    </location>
</feature>
<feature type="topological domain" description="Vacuolar" evidence="1">
    <location>
        <begin position="410"/>
        <end position="424"/>
    </location>
</feature>
<feature type="transmembrane region" description="Helical; Name=4" evidence="3">
    <location>
        <begin position="425"/>
        <end position="445"/>
    </location>
</feature>
<feature type="topological domain" description="Cytoplasmic" evidence="1">
    <location>
        <begin position="446"/>
        <end position="453"/>
    </location>
</feature>
<feature type="transmembrane region" description="Helical; Name=5" evidence="3">
    <location>
        <begin position="454"/>
        <end position="474"/>
    </location>
</feature>
<feature type="topological domain" description="Vacuolar" evidence="1">
    <location>
        <begin position="475"/>
        <end position="491"/>
    </location>
</feature>
<feature type="transmembrane region" description="Helical; Name=6" evidence="3">
    <location>
        <begin position="492"/>
        <end position="512"/>
    </location>
</feature>
<feature type="topological domain" description="Cytoplasmic" evidence="1">
    <location>
        <begin position="513"/>
        <end position="588"/>
    </location>
</feature>
<feature type="transmembrane region" description="Helical; Name=7" evidence="3">
    <location>
        <begin position="589"/>
        <end position="609"/>
    </location>
</feature>
<feature type="topological domain" description="Vacuolar" evidence="1">
    <location>
        <begin position="610"/>
        <end position="636"/>
    </location>
</feature>
<feature type="transmembrane region" description="Helical; Name=8" evidence="3">
    <location>
        <begin position="637"/>
        <end position="657"/>
    </location>
</feature>
<feature type="topological domain" description="Cytoplasmic" evidence="1">
    <location>
        <begin position="658"/>
        <end position="663"/>
    </location>
</feature>
<feature type="transmembrane region" description="Helical; Name=9" evidence="3">
    <location>
        <begin position="664"/>
        <end position="684"/>
    </location>
</feature>
<feature type="topological domain" description="Vacuolar" evidence="1">
    <location>
        <begin position="685"/>
        <end position="939"/>
    </location>
</feature>
<feature type="region of interest" description="Disordered" evidence="5">
    <location>
        <begin position="540"/>
        <end position="561"/>
    </location>
</feature>
<feature type="compositionally biased region" description="Basic and acidic residues" evidence="5">
    <location>
        <begin position="540"/>
        <end position="552"/>
    </location>
</feature>
<feature type="active site" description="Proton acceptor" evidence="2">
    <location>
        <position position="193"/>
    </location>
</feature>
<feature type="binding site" evidence="2">
    <location>
        <position position="149"/>
    </location>
    <ligand>
        <name>Zn(2+)</name>
        <dbReference type="ChEBI" id="CHEBI:29105"/>
        <label>1</label>
        <note>catalytic</note>
    </ligand>
</feature>
<feature type="binding site" evidence="2">
    <location>
        <position position="161"/>
    </location>
    <ligand>
        <name>Zn(2+)</name>
        <dbReference type="ChEBI" id="CHEBI:29105"/>
        <label>1</label>
        <note>catalytic</note>
    </ligand>
</feature>
<feature type="binding site" evidence="2">
    <location>
        <position position="161"/>
    </location>
    <ligand>
        <name>Zn(2+)</name>
        <dbReference type="ChEBI" id="CHEBI:29105"/>
        <label>2</label>
        <note>catalytic</note>
    </ligand>
</feature>
<feature type="binding site" evidence="2">
    <location>
        <position position="194"/>
    </location>
    <ligand>
        <name>Zn(2+)</name>
        <dbReference type="ChEBI" id="CHEBI:29105"/>
        <label>2</label>
        <note>catalytic</note>
    </ligand>
</feature>
<feature type="binding site" evidence="2">
    <location>
        <position position="219"/>
    </location>
    <ligand>
        <name>Zn(2+)</name>
        <dbReference type="ChEBI" id="CHEBI:29105"/>
        <label>1</label>
        <note>catalytic</note>
    </ligand>
</feature>
<feature type="binding site" evidence="2">
    <location>
        <position position="293"/>
    </location>
    <ligand>
        <name>Zn(2+)</name>
        <dbReference type="ChEBI" id="CHEBI:29105"/>
        <label>2</label>
        <note>catalytic</note>
    </ligand>
</feature>
<feature type="site" description="Transition state stabilizer" evidence="2">
    <location>
        <position position="292"/>
    </location>
</feature>
<feature type="glycosylation site" description="N-linked (GlcNAc...) asparagine" evidence="4">
    <location>
        <position position="59"/>
    </location>
</feature>
<feature type="glycosylation site" description="N-linked (GlcNAc...) asparagine" evidence="4">
    <location>
        <position position="88"/>
    </location>
</feature>
<feature type="glycosylation site" description="N-linked (GlcNAc...) asparagine" evidence="4">
    <location>
        <position position="114"/>
    </location>
</feature>
<feature type="glycosylation site" description="N-linked (GlcNAc...) asparagine" evidence="4">
    <location>
        <position position="326"/>
    </location>
</feature>
<feature type="glycosylation site" description="N-linked (GlcNAc...) asparagine" evidence="4">
    <location>
        <position position="622"/>
    </location>
</feature>
<feature type="glycosylation site" description="N-linked (GlcNAc...) asparagine" evidence="4">
    <location>
        <position position="810"/>
    </location>
</feature>
<feature type="glycosylation site" description="N-linked (GlcNAc...) asparagine" evidence="4">
    <location>
        <position position="820"/>
    </location>
</feature>
<comment type="function">
    <text evidence="1">May be involved in vacuolar sorting and osmoregulation.</text>
</comment>
<comment type="cofactor">
    <cofactor evidence="2">
        <name>Zn(2+)</name>
        <dbReference type="ChEBI" id="CHEBI:29105"/>
    </cofactor>
    <text evidence="2">Binds 2 Zn(2+) ions per subunit.</text>
</comment>
<comment type="subcellular location">
    <subcellularLocation>
        <location evidence="1">Vacuole membrane</location>
        <topology evidence="3">Multi-pass membrane protein</topology>
    </subcellularLocation>
</comment>
<comment type="similarity">
    <text evidence="6">Belongs to the peptidase M28 family.</text>
</comment>
<sequence>MGFNSIFKFRKTSLSLLLFAVYFIIGILYFIDKTRYKHSLPIDSEGVALLDNAWLDLQNITNKCHPYSSKENDRVHDYLLNRIADIINKTSYAEVSDDYSTNSRALFKQQDVFNASSIASRIIYFESSNILVKMEGRNPVLKSLLLSAHYDSTPSSHGVTDDGKGIVSLLALLEHFSKVQPERTLVFNFNNNEEFGLLGATIFFEHEWSKNVEYFINLEGTGIGGKAVLFRTTDTSTAKIYQNSVKNSPFGNSIYQQGFYNRYIGSETDYKVYENKGLRGWDIAFYKPRNLYHTIEDSIGHSSKPALWHMLHTSLQLSKYIAELDNISLGETQDLSPAVYFDLAGYTFVAIPSTKLFWINIALLIIMPIISIFLFSIVKKYNNEIIDSGNIWWRLPISAMSSGTIIIFTTKLIMKWNPYILSRNFLLPLIGLTFEFIILNSYILTMFENLSSSFDFKTIAINEISFLFWIVLAYQTWKLYDNNYQNTGIYPFTICYIVMATAGNIGYLFLIFKNIEIVEDEEASLVQYVSNEQSTIEGRYRDEINGRDDSSRDSNSASIPTRANDERAPLLTNSVDNINQRTILKESKLVYNYDWIIEFLLVVPFSTFLLYNSLELIMDAVNQTIQETGDLYKVYKILAIGSILISIPTLPFAYKIGCQLGKTLTFISIGCLLISMALAPFTEMNPIKFRFMQVNDKVEISGVTTHDNNKLRDMINNLPSVKRDDKKVQCQEITKFSSVCEYEGSPVHLVDNMYRDKLKLMEVIVLKDDRLSPERSPYAPITAEVEIRVQENRMCNVYFGQNKERIREVNVSIIEGNDRNSSVSLRYRVNNNRNGIDELQLHKLRFEANSYIVGIKWMPEILMSNEEEDDVLPIKVECYWGEYEESSVEVGEGEVGGGAVIEYYDKIPSYSEILEYKPVDVVIANREKGLVKLTEAMVL</sequence>
<name>PFF1_VANPO</name>
<protein>
    <recommendedName>
        <fullName evidence="1">Vacuolar membrane protease</fullName>
        <ecNumber evidence="6">3.4.-.-</ecNumber>
    </recommendedName>
    <alternativeName>
        <fullName evidence="1">FXNA-related family protease 1</fullName>
    </alternativeName>
</protein>
<keyword id="KW-0325">Glycoprotein</keyword>
<keyword id="KW-0378">Hydrolase</keyword>
<keyword id="KW-0472">Membrane</keyword>
<keyword id="KW-0479">Metal-binding</keyword>
<keyword id="KW-0482">Metalloprotease</keyword>
<keyword id="KW-0645">Protease</keyword>
<keyword id="KW-1185">Reference proteome</keyword>
<keyword id="KW-0812">Transmembrane</keyword>
<keyword id="KW-1133">Transmembrane helix</keyword>
<keyword id="KW-0926">Vacuole</keyword>
<keyword id="KW-0862">Zinc</keyword>
<proteinExistence type="inferred from homology"/>
<accession>A7TM20</accession>